<comment type="function">
    <text evidence="1">Involved in the aerobic and anaerobic degradation of long-chain fatty acids via beta-oxidation cycle. Catalyzes the formation of 3-oxoacyl-CoA from enoyl-CoA via L-3-hydroxyacyl-CoA. It can also use D-3-hydroxyacyl-CoA and cis-3-enoyl-CoA as substrate.</text>
</comment>
<comment type="catalytic activity">
    <reaction evidence="1">
        <text>a (3S)-3-hydroxyacyl-CoA + NAD(+) = a 3-oxoacyl-CoA + NADH + H(+)</text>
        <dbReference type="Rhea" id="RHEA:22432"/>
        <dbReference type="ChEBI" id="CHEBI:15378"/>
        <dbReference type="ChEBI" id="CHEBI:57318"/>
        <dbReference type="ChEBI" id="CHEBI:57540"/>
        <dbReference type="ChEBI" id="CHEBI:57945"/>
        <dbReference type="ChEBI" id="CHEBI:90726"/>
        <dbReference type="EC" id="1.1.1.35"/>
    </reaction>
</comment>
<comment type="catalytic activity">
    <reaction evidence="1">
        <text>a (3S)-3-hydroxyacyl-CoA = a (2E)-enoyl-CoA + H2O</text>
        <dbReference type="Rhea" id="RHEA:16105"/>
        <dbReference type="ChEBI" id="CHEBI:15377"/>
        <dbReference type="ChEBI" id="CHEBI:57318"/>
        <dbReference type="ChEBI" id="CHEBI:58856"/>
        <dbReference type="EC" id="4.2.1.17"/>
    </reaction>
</comment>
<comment type="catalytic activity">
    <reaction evidence="1">
        <text>a 4-saturated-(3S)-3-hydroxyacyl-CoA = a (3E)-enoyl-CoA + H2O</text>
        <dbReference type="Rhea" id="RHEA:20724"/>
        <dbReference type="ChEBI" id="CHEBI:15377"/>
        <dbReference type="ChEBI" id="CHEBI:58521"/>
        <dbReference type="ChEBI" id="CHEBI:137480"/>
        <dbReference type="EC" id="4.2.1.17"/>
    </reaction>
</comment>
<comment type="catalytic activity">
    <reaction evidence="1">
        <text>(3S)-3-hydroxybutanoyl-CoA = (3R)-3-hydroxybutanoyl-CoA</text>
        <dbReference type="Rhea" id="RHEA:21760"/>
        <dbReference type="ChEBI" id="CHEBI:57315"/>
        <dbReference type="ChEBI" id="CHEBI:57316"/>
        <dbReference type="EC" id="5.1.2.3"/>
    </reaction>
</comment>
<comment type="catalytic activity">
    <reaction evidence="1">
        <text>a (3Z)-enoyl-CoA = a 4-saturated (2E)-enoyl-CoA</text>
        <dbReference type="Rhea" id="RHEA:45900"/>
        <dbReference type="ChEBI" id="CHEBI:85097"/>
        <dbReference type="ChEBI" id="CHEBI:85489"/>
        <dbReference type="EC" id="5.3.3.8"/>
    </reaction>
</comment>
<comment type="catalytic activity">
    <reaction evidence="1">
        <text>a (3E)-enoyl-CoA = a 4-saturated (2E)-enoyl-CoA</text>
        <dbReference type="Rhea" id="RHEA:45228"/>
        <dbReference type="ChEBI" id="CHEBI:58521"/>
        <dbReference type="ChEBI" id="CHEBI:85097"/>
        <dbReference type="EC" id="5.3.3.8"/>
    </reaction>
</comment>
<comment type="pathway">
    <text evidence="1">Lipid metabolism; fatty acid beta-oxidation.</text>
</comment>
<comment type="subunit">
    <text evidence="1">Heterotetramer of two alpha chains (FadB) and two beta chains (FadA).</text>
</comment>
<comment type="similarity">
    <text evidence="1">In the N-terminal section; belongs to the enoyl-CoA hydratase/isomerase family.</text>
</comment>
<comment type="similarity">
    <text evidence="1">In the C-terminal section; belongs to the 3-hydroxyacyl-CoA dehydrogenase family.</text>
</comment>
<sequence length="715" mass="77268">MIYQGKAITVKALESGIVELKFDLKGESVNKFNRLTLNELRQAVDAIQADASVKGVIVSSGKDVFIVGADITEFVDNFKLPEAELVAGNLEANRIFNAFEDLEVPTVAAISGIALGGGLEMCLAADYRVMSTSAKIGLPEVKLGIYPGFGGTVRLPRLIGSDNAIEWIAAGKENRAEDALKVGAVDAVVAPELLMAGALDLVKRAISGELDYKAKRQPKLEKLKLNAIEQMMAFETAKGFVAGQAGPNYPAPVEAIKTIQKAANFGRDKALEVEAAGFAKLAKTSVAESLIGLFLNDQELKRKAKAHDEIAHDAKQAAVLGAGIMGGGIAYQSAVKGTPILMKDIREEAIQLGLNEASKLLGNRVEKGRLTPAKMAEALNAIRPTLSYGDFANVDIVVEAVVENPKVKQAVLAEVETQVKDDAILASNTSTISINLLAKALKRPENFVGMHFFNPVHMMPLVEVIRGEKSSEVAVATTVAYAKKMGKNPIVVNDCPGFLVNRVLFPYFGGFAKLVSAGVDFVRIDKVMEKFGWPMGPAYLMDVVGIDTGHHGRDVMAEGFPDRMKDERRSAVDALYEANRLGQKNGKGFYAYETDKRGKPKKVADASVLDVLKPIVFEQREVTDEDIINWMMIPLCLETVRCLEDGIVETAAEADMGLVYGIGFPPFRGGALRYIDSIGVAEFVALADQYADLGPLYHPTAKLREMAKNGQRFFN</sequence>
<keyword id="KW-0276">Fatty acid metabolism</keyword>
<keyword id="KW-0413">Isomerase</keyword>
<keyword id="KW-0442">Lipid degradation</keyword>
<keyword id="KW-0443">Lipid metabolism</keyword>
<keyword id="KW-0456">Lyase</keyword>
<keyword id="KW-0511">Multifunctional enzyme</keyword>
<keyword id="KW-0520">NAD</keyword>
<keyword id="KW-0560">Oxidoreductase</keyword>
<gene>
    <name evidence="1" type="primary">fadB</name>
</gene>
<name>FADB_ECTOL</name>
<accession>Q93Q12</accession>
<evidence type="ECO:0000255" key="1">
    <source>
        <dbReference type="HAMAP-Rule" id="MF_01621"/>
    </source>
</evidence>
<feature type="chain" id="PRO_0000109277" description="Fatty acid oxidation complex subunit alpha">
    <location>
        <begin position="1"/>
        <end position="715"/>
    </location>
</feature>
<feature type="region of interest" description="Enoyl-CoA hydratase/isomerase" evidence="1">
    <location>
        <begin position="1"/>
        <end position="190"/>
    </location>
</feature>
<feature type="region of interest" description="3-hydroxyacyl-CoA dehydrogenase" evidence="1">
    <location>
        <begin position="312"/>
        <end position="715"/>
    </location>
</feature>
<feature type="active site" description="For 3-hydroxyacyl-CoA dehydrogenase activity" evidence="1">
    <location>
        <position position="451"/>
    </location>
</feature>
<feature type="binding site" evidence="1">
    <location>
        <position position="297"/>
    </location>
    <ligand>
        <name>substrate</name>
    </ligand>
</feature>
<feature type="binding site" evidence="1">
    <location>
        <position position="325"/>
    </location>
    <ligand>
        <name>NAD(+)</name>
        <dbReference type="ChEBI" id="CHEBI:57540"/>
    </ligand>
</feature>
<feature type="binding site" evidence="1">
    <location>
        <position position="344"/>
    </location>
    <ligand>
        <name>NAD(+)</name>
        <dbReference type="ChEBI" id="CHEBI:57540"/>
    </ligand>
</feature>
<feature type="binding site" evidence="1">
    <location>
        <begin position="401"/>
        <end position="403"/>
    </location>
    <ligand>
        <name>NAD(+)</name>
        <dbReference type="ChEBI" id="CHEBI:57540"/>
    </ligand>
</feature>
<feature type="binding site" evidence="1">
    <location>
        <position position="408"/>
    </location>
    <ligand>
        <name>NAD(+)</name>
        <dbReference type="ChEBI" id="CHEBI:57540"/>
    </ligand>
</feature>
<feature type="binding site" evidence="1">
    <location>
        <position position="430"/>
    </location>
    <ligand>
        <name>NAD(+)</name>
        <dbReference type="ChEBI" id="CHEBI:57540"/>
    </ligand>
</feature>
<feature type="binding site" evidence="1">
    <location>
        <position position="454"/>
    </location>
    <ligand>
        <name>NAD(+)</name>
        <dbReference type="ChEBI" id="CHEBI:57540"/>
    </ligand>
</feature>
<feature type="binding site" evidence="1">
    <location>
        <position position="501"/>
    </location>
    <ligand>
        <name>substrate</name>
    </ligand>
</feature>
<feature type="binding site" evidence="1">
    <location>
        <position position="660"/>
    </location>
    <ligand>
        <name>substrate</name>
    </ligand>
</feature>
<feature type="site" description="Important for catalytic activity" evidence="1">
    <location>
        <position position="120"/>
    </location>
</feature>
<feature type="site" description="Important for catalytic activity" evidence="1">
    <location>
        <position position="140"/>
    </location>
</feature>
<dbReference type="EC" id="4.2.1.17" evidence="1"/>
<dbReference type="EC" id="5.1.2.3" evidence="1"/>
<dbReference type="EC" id="5.3.3.8" evidence="1"/>
<dbReference type="EC" id="1.1.1.35" evidence="1"/>
<dbReference type="EMBL" id="AF288535">
    <property type="protein sequence ID" value="AAK83058.1"/>
    <property type="molecule type" value="Genomic_DNA"/>
</dbReference>
<dbReference type="SMR" id="Q93Q12"/>
<dbReference type="STRING" id="301.SAMN05216280_100822"/>
<dbReference type="UniPathway" id="UPA00659"/>
<dbReference type="GO" id="GO:0036125">
    <property type="term" value="C:fatty acid beta-oxidation multienzyme complex"/>
    <property type="evidence" value="ECO:0007669"/>
    <property type="project" value="InterPro"/>
</dbReference>
<dbReference type="GO" id="GO:0008692">
    <property type="term" value="F:3-hydroxybutyryl-CoA epimerase activity"/>
    <property type="evidence" value="ECO:0007669"/>
    <property type="project" value="UniProtKB-UniRule"/>
</dbReference>
<dbReference type="GO" id="GO:0004165">
    <property type="term" value="F:delta(3)-delta(2)-enoyl-CoA isomerase activity"/>
    <property type="evidence" value="ECO:0007669"/>
    <property type="project" value="UniProtKB-UniRule"/>
</dbReference>
<dbReference type="GO" id="GO:0004300">
    <property type="term" value="F:enoyl-CoA hydratase activity"/>
    <property type="evidence" value="ECO:0007669"/>
    <property type="project" value="UniProtKB-UniRule"/>
</dbReference>
<dbReference type="GO" id="GO:0016509">
    <property type="term" value="F:long-chain-3-hydroxyacyl-CoA dehydrogenase activity"/>
    <property type="evidence" value="ECO:0007669"/>
    <property type="project" value="TreeGrafter"/>
</dbReference>
<dbReference type="GO" id="GO:0070403">
    <property type="term" value="F:NAD+ binding"/>
    <property type="evidence" value="ECO:0007669"/>
    <property type="project" value="InterPro"/>
</dbReference>
<dbReference type="GO" id="GO:0006635">
    <property type="term" value="P:fatty acid beta-oxidation"/>
    <property type="evidence" value="ECO:0007669"/>
    <property type="project" value="UniProtKB-UniRule"/>
</dbReference>
<dbReference type="CDD" id="cd06558">
    <property type="entry name" value="crotonase-like"/>
    <property type="match status" value="1"/>
</dbReference>
<dbReference type="FunFam" id="1.10.1040.50:FF:000001">
    <property type="entry name" value="Fatty acid oxidation complex subunit alpha"/>
    <property type="match status" value="1"/>
</dbReference>
<dbReference type="FunFam" id="3.90.226.10:FF:000018">
    <property type="entry name" value="Fatty acid oxidation complex subunit alpha"/>
    <property type="match status" value="1"/>
</dbReference>
<dbReference type="FunFam" id="3.40.50.720:FF:000009">
    <property type="entry name" value="Fatty oxidation complex, alpha subunit"/>
    <property type="match status" value="1"/>
</dbReference>
<dbReference type="Gene3D" id="1.10.1040.50">
    <property type="match status" value="1"/>
</dbReference>
<dbReference type="Gene3D" id="3.90.226.10">
    <property type="entry name" value="2-enoyl-CoA Hydratase, Chain A, domain 1"/>
    <property type="match status" value="1"/>
</dbReference>
<dbReference type="Gene3D" id="3.40.50.720">
    <property type="entry name" value="NAD(P)-binding Rossmann-like Domain"/>
    <property type="match status" value="1"/>
</dbReference>
<dbReference type="HAMAP" id="MF_01621">
    <property type="entry name" value="FadB"/>
    <property type="match status" value="1"/>
</dbReference>
<dbReference type="InterPro" id="IPR006180">
    <property type="entry name" value="3-OHacyl-CoA_DH_CS"/>
</dbReference>
<dbReference type="InterPro" id="IPR006176">
    <property type="entry name" value="3-OHacyl-CoA_DH_NAD-bd"/>
</dbReference>
<dbReference type="InterPro" id="IPR006108">
    <property type="entry name" value="3HC_DH_C"/>
</dbReference>
<dbReference type="InterPro" id="IPR008927">
    <property type="entry name" value="6-PGluconate_DH-like_C_sf"/>
</dbReference>
<dbReference type="InterPro" id="IPR029045">
    <property type="entry name" value="ClpP/crotonase-like_dom_sf"/>
</dbReference>
<dbReference type="InterPro" id="IPR018376">
    <property type="entry name" value="Enoyl-CoA_hyd/isom_CS"/>
</dbReference>
<dbReference type="InterPro" id="IPR001753">
    <property type="entry name" value="Enoyl-CoA_hydra/iso"/>
</dbReference>
<dbReference type="InterPro" id="IPR050136">
    <property type="entry name" value="FA_oxidation_alpha_subunit"/>
</dbReference>
<dbReference type="InterPro" id="IPR012799">
    <property type="entry name" value="FadB"/>
</dbReference>
<dbReference type="InterPro" id="IPR036291">
    <property type="entry name" value="NAD(P)-bd_dom_sf"/>
</dbReference>
<dbReference type="NCBIfam" id="TIGR02437">
    <property type="entry name" value="FadB"/>
    <property type="match status" value="1"/>
</dbReference>
<dbReference type="NCBIfam" id="NF008727">
    <property type="entry name" value="PRK11730.1"/>
    <property type="match status" value="1"/>
</dbReference>
<dbReference type="PANTHER" id="PTHR43612">
    <property type="entry name" value="TRIFUNCTIONAL ENZYME SUBUNIT ALPHA"/>
    <property type="match status" value="1"/>
</dbReference>
<dbReference type="PANTHER" id="PTHR43612:SF3">
    <property type="entry name" value="TRIFUNCTIONAL ENZYME SUBUNIT ALPHA, MITOCHONDRIAL"/>
    <property type="match status" value="1"/>
</dbReference>
<dbReference type="Pfam" id="PF00725">
    <property type="entry name" value="3HCDH"/>
    <property type="match status" value="1"/>
</dbReference>
<dbReference type="Pfam" id="PF02737">
    <property type="entry name" value="3HCDH_N"/>
    <property type="match status" value="1"/>
</dbReference>
<dbReference type="Pfam" id="PF00378">
    <property type="entry name" value="ECH_1"/>
    <property type="match status" value="1"/>
</dbReference>
<dbReference type="SUPFAM" id="SSF48179">
    <property type="entry name" value="6-phosphogluconate dehydrogenase C-terminal domain-like"/>
    <property type="match status" value="2"/>
</dbReference>
<dbReference type="SUPFAM" id="SSF52096">
    <property type="entry name" value="ClpP/crotonase"/>
    <property type="match status" value="1"/>
</dbReference>
<dbReference type="SUPFAM" id="SSF51735">
    <property type="entry name" value="NAD(P)-binding Rossmann-fold domains"/>
    <property type="match status" value="1"/>
</dbReference>
<dbReference type="PROSITE" id="PS00067">
    <property type="entry name" value="3HCDH"/>
    <property type="match status" value="1"/>
</dbReference>
<dbReference type="PROSITE" id="PS00166">
    <property type="entry name" value="ENOYL_COA_HYDRATASE"/>
    <property type="match status" value="1"/>
</dbReference>
<reference key="1">
    <citation type="journal article" date="2002" name="Arch. Microbiol.">
        <title>The role of the fatty acid beta-oxidation multienzyme complex from Pseudomonas oleovorans in polyhydroxyalkanoate biosynthesis: molecular characterization of the fadBA operon from P. oleovorans and of the enoyl-CoA hydratase genes phaJ from P. oleovorans and Pseudomonas putida.</title>
        <authorList>
            <person name="Fiedler S."/>
            <person name="Steinbuchel A."/>
            <person name="Rehm B.H."/>
        </authorList>
    </citation>
    <scope>NUCLEOTIDE SEQUENCE [GENOMIC DNA]</scope>
    <source>
        <strain>ATCC 29347 / CIP 105816 / NRRL B-14683 / TF4-1L</strain>
    </source>
</reference>
<proteinExistence type="inferred from homology"/>
<organism>
    <name type="scientific">Ectopseudomonas oleovorans</name>
    <name type="common">Pseudomonas oleovorans</name>
    <dbReference type="NCBI Taxonomy" id="301"/>
    <lineage>
        <taxon>Bacteria</taxon>
        <taxon>Pseudomonadati</taxon>
        <taxon>Pseudomonadota</taxon>
        <taxon>Gammaproteobacteria</taxon>
        <taxon>Pseudomonadales</taxon>
        <taxon>Pseudomonadaceae</taxon>
        <taxon>Ectopseudomonas</taxon>
    </lineage>
</organism>
<protein>
    <recommendedName>
        <fullName evidence="1">Fatty acid oxidation complex subunit alpha</fullName>
    </recommendedName>
    <domain>
        <recommendedName>
            <fullName evidence="1">Enoyl-CoA hydratase/Delta(3)-cis-Delta(2)-trans-enoyl-CoA isomerase/3-hydroxybutyryl-CoA epimerase</fullName>
            <ecNumber evidence="1">4.2.1.17</ecNumber>
            <ecNumber evidence="1">5.1.2.3</ecNumber>
            <ecNumber evidence="1">5.3.3.8</ecNumber>
        </recommendedName>
    </domain>
    <domain>
        <recommendedName>
            <fullName evidence="1">3-hydroxyacyl-CoA dehydrogenase</fullName>
            <ecNumber evidence="1">1.1.1.35</ecNumber>
        </recommendedName>
    </domain>
</protein>